<protein>
    <recommendedName>
        <fullName>Oxoglutarate dehydrogenase inhibitor</fullName>
    </recommendedName>
</protein>
<name>ODHI_CORGL</name>
<organism>
    <name type="scientific">Corynebacterium glutamicum (strain ATCC 13032 / DSM 20300 / JCM 1318 / BCRC 11384 / CCUG 27702 / LMG 3730 / NBRC 12168 / NCIMB 10025 / NRRL B-2784 / 534)</name>
    <dbReference type="NCBI Taxonomy" id="196627"/>
    <lineage>
        <taxon>Bacteria</taxon>
        <taxon>Bacillati</taxon>
        <taxon>Actinomycetota</taxon>
        <taxon>Actinomycetes</taxon>
        <taxon>Mycobacteriales</taxon>
        <taxon>Corynebacteriaceae</taxon>
        <taxon>Corynebacterium</taxon>
    </lineage>
</organism>
<dbReference type="EMBL" id="BA000036">
    <property type="protein sequence ID" value="BAB98834.1"/>
    <property type="molecule type" value="Genomic_DNA"/>
</dbReference>
<dbReference type="EMBL" id="BX927152">
    <property type="protein sequence ID" value="CAF21450.1"/>
    <property type="molecule type" value="Genomic_DNA"/>
</dbReference>
<dbReference type="RefSeq" id="NP_600658.1">
    <property type="nucleotide sequence ID" value="NC_003450.3"/>
</dbReference>
<dbReference type="RefSeq" id="WP_003856253.1">
    <property type="nucleotide sequence ID" value="NC_006958.1"/>
</dbReference>
<dbReference type="PDB" id="2KB3">
    <property type="method" value="NMR"/>
    <property type="chains" value="A=1-143"/>
</dbReference>
<dbReference type="PDB" id="2KB4">
    <property type="method" value="NMR"/>
    <property type="chains" value="A=1-143"/>
</dbReference>
<dbReference type="PDB" id="4QCJ">
    <property type="method" value="X-ray"/>
    <property type="resolution" value="2.00 A"/>
    <property type="chains" value="A=1-143"/>
</dbReference>
<dbReference type="PDB" id="8P5X">
    <property type="method" value="EM"/>
    <property type="resolution" value="2.29 A"/>
    <property type="chains" value="G/H/I/J/K/L=1-143"/>
</dbReference>
<dbReference type="PDBsum" id="2KB3"/>
<dbReference type="PDBsum" id="2KB4"/>
<dbReference type="PDBsum" id="4QCJ"/>
<dbReference type="PDBsum" id="8P5X"/>
<dbReference type="BMRB" id="Q8NQJ3"/>
<dbReference type="EMDB" id="EMD-17456"/>
<dbReference type="SMR" id="Q8NQJ3"/>
<dbReference type="DIP" id="DIP-48322N"/>
<dbReference type="IntAct" id="Q8NQJ3">
    <property type="interactions" value="3"/>
</dbReference>
<dbReference type="MINT" id="Q8NQJ3"/>
<dbReference type="STRING" id="196627.cg1630"/>
<dbReference type="iPTMnet" id="Q8NQJ3"/>
<dbReference type="GeneID" id="1019415"/>
<dbReference type="KEGG" id="cgb:cg1630"/>
<dbReference type="KEGG" id="cgl:Cgl1441"/>
<dbReference type="PATRIC" id="fig|196627.13.peg.1408"/>
<dbReference type="eggNOG" id="COG1716">
    <property type="taxonomic scope" value="Bacteria"/>
</dbReference>
<dbReference type="HOGENOM" id="CLU_108862_1_0_11"/>
<dbReference type="OrthoDB" id="9815925at2"/>
<dbReference type="BioCyc" id="CORYNE:G18NG-11024-MONOMER"/>
<dbReference type="EvolutionaryTrace" id="Q8NQJ3"/>
<dbReference type="Proteomes" id="UP000000582">
    <property type="component" value="Chromosome"/>
</dbReference>
<dbReference type="Proteomes" id="UP000001009">
    <property type="component" value="Chromosome"/>
</dbReference>
<dbReference type="GO" id="GO:0005737">
    <property type="term" value="C:cytoplasm"/>
    <property type="evidence" value="ECO:0007669"/>
    <property type="project" value="UniProtKB-SubCell"/>
</dbReference>
<dbReference type="CDD" id="cd22684">
    <property type="entry name" value="FHA_GarA_OdhI-like"/>
    <property type="match status" value="1"/>
</dbReference>
<dbReference type="DisProt" id="DP01581"/>
<dbReference type="Gene3D" id="2.60.200.20">
    <property type="match status" value="1"/>
</dbReference>
<dbReference type="InterPro" id="IPR050923">
    <property type="entry name" value="Cell_Proc_Reg/RNA_Proc"/>
</dbReference>
<dbReference type="InterPro" id="IPR000253">
    <property type="entry name" value="FHA_dom"/>
</dbReference>
<dbReference type="InterPro" id="IPR048204">
    <property type="entry name" value="OxygluDhInhib_OdhI"/>
</dbReference>
<dbReference type="InterPro" id="IPR008984">
    <property type="entry name" value="SMAD_FHA_dom_sf"/>
</dbReference>
<dbReference type="NCBIfam" id="NF041660">
    <property type="entry name" value="oxygluDhInhib_OdhI"/>
    <property type="match status" value="1"/>
</dbReference>
<dbReference type="PANTHER" id="PTHR23308">
    <property type="entry name" value="NUCLEAR INHIBITOR OF PROTEIN PHOSPHATASE-1"/>
    <property type="match status" value="1"/>
</dbReference>
<dbReference type="Pfam" id="PF00498">
    <property type="entry name" value="FHA"/>
    <property type="match status" value="1"/>
</dbReference>
<dbReference type="SMART" id="SM00240">
    <property type="entry name" value="FHA"/>
    <property type="match status" value="1"/>
</dbReference>
<dbReference type="SUPFAM" id="SSF49879">
    <property type="entry name" value="SMAD/FHA domain"/>
    <property type="match status" value="1"/>
</dbReference>
<dbReference type="PROSITE" id="PS50006">
    <property type="entry name" value="FHA_DOMAIN"/>
    <property type="match status" value="1"/>
</dbReference>
<comment type="function">
    <text evidence="2">An essential component of the PknG signaling pathway. When unphosphorylated, it inhibits the activity of 2-oxoglutarate dehydrogenase. When phosphorylated it does not inhibit 2-oxoglutarate dehydrogenase.</text>
</comment>
<comment type="interaction">
    <interactant intactId="EBI-7868645">
        <id>Q8NQJ3</id>
    </interactant>
    <interactant intactId="EBI-7868591">
        <id>Q8NRC3</id>
        <label>odhA</label>
    </interactant>
    <organismsDiffer>false</organismsDiffer>
    <experiments>2</experiments>
</comment>
<comment type="subcellular location">
    <subcellularLocation>
        <location evidence="3">Cytoplasm</location>
    </subcellularLocation>
</comment>
<gene>
    <name type="primary">odhI</name>
    <name type="ordered locus">Cgl1441</name>
    <name type="ordered locus">cg1630</name>
</gene>
<reference key="1">
    <citation type="journal article" date="2003" name="Appl. Microbiol. Biotechnol.">
        <title>The Corynebacterium glutamicum genome: features and impacts on biotechnological processes.</title>
        <authorList>
            <person name="Ikeda M."/>
            <person name="Nakagawa S."/>
        </authorList>
    </citation>
    <scope>NUCLEOTIDE SEQUENCE [LARGE SCALE GENOMIC DNA]</scope>
    <source>
        <strain>ATCC 13032 / DSM 20300 / JCM 1318 / BCRC 11384 / CCUG 27702 / LMG 3730 / NBRC 12168 / NCIMB 10025 / NRRL B-2784 / 534</strain>
    </source>
</reference>
<reference evidence="4" key="2">
    <citation type="journal article" date="2003" name="J. Biotechnol.">
        <title>The complete Corynebacterium glutamicum ATCC 13032 genome sequence and its impact on the production of L-aspartate-derived amino acids and vitamins.</title>
        <authorList>
            <person name="Kalinowski J."/>
            <person name="Bathe B."/>
            <person name="Bartels D."/>
            <person name="Bischoff N."/>
            <person name="Bott M."/>
            <person name="Burkovski A."/>
            <person name="Dusch N."/>
            <person name="Eggeling L."/>
            <person name="Eikmanns B.J."/>
            <person name="Gaigalat L."/>
            <person name="Goesmann A."/>
            <person name="Hartmann M."/>
            <person name="Huthmacher K."/>
            <person name="Kraemer R."/>
            <person name="Linke B."/>
            <person name="McHardy A.C."/>
            <person name="Meyer F."/>
            <person name="Moeckel B."/>
            <person name="Pfefferle W."/>
            <person name="Puehler A."/>
            <person name="Rey D.A."/>
            <person name="Rueckert C."/>
            <person name="Rupp O."/>
            <person name="Sahm H."/>
            <person name="Wendisch V.F."/>
            <person name="Wiegraebe I."/>
            <person name="Tauch A."/>
        </authorList>
    </citation>
    <scope>NUCLEOTIDE SEQUENCE [LARGE SCALE GENOMIC DNA]</scope>
    <source>
        <strain evidence="4">ATCC 13032 / DSM 20300 / JCM 1318 / BCRC 11384 / CCUG 27702 / LMG 3730 / NBRC 12168 / NCIMB 10025 / NRRL B-2784 / 534</strain>
    </source>
</reference>
<reference evidence="3" key="3">
    <citation type="journal article" date="2006" name="J. Biol. Chem.">
        <title>Corynebacterial protein kinase G controls 2-oxoglutarate dehydrogenase activity via the phosphorylation status of the OdhI protein.</title>
        <authorList>
            <person name="Niebisch A."/>
            <person name="Kabus A."/>
            <person name="Schultz C."/>
            <person name="Weil B."/>
            <person name="Bott M."/>
        </authorList>
    </citation>
    <scope>PROTEIN SEQUENCE OF 2-19</scope>
    <scope>IDENTIFICATION</scope>
    <scope>FUNCTION</scope>
    <scope>PHOSPHORYLATION AT THR-14</scope>
    <scope>MUTAGENESIS OF THR-14</scope>
    <source>
        <strain evidence="2">ATCC 13032 / DSM 20300 / JCM 1318 / BCRC 11384 / CCUG 27702 / LMG 3730 / NBRC 12168 / NCIMB 10025 / NRRL B-2784 / 534</strain>
    </source>
</reference>
<accession>Q8NQJ3</accession>
<accession>Q6M5D9</accession>
<evidence type="ECO:0000255" key="1">
    <source>
        <dbReference type="PROSITE-ProRule" id="PRU00086"/>
    </source>
</evidence>
<evidence type="ECO:0000269" key="2">
    <source>
    </source>
</evidence>
<evidence type="ECO:0000305" key="3"/>
<evidence type="ECO:0000312" key="4">
    <source>
        <dbReference type="EMBL" id="CAF21450.1"/>
    </source>
</evidence>
<evidence type="ECO:0007829" key="5">
    <source>
        <dbReference type="PDB" id="2KB3"/>
    </source>
</evidence>
<evidence type="ECO:0007829" key="6">
    <source>
        <dbReference type="PDB" id="2KB4"/>
    </source>
</evidence>
<evidence type="ECO:0007829" key="7">
    <source>
        <dbReference type="PDB" id="4QCJ"/>
    </source>
</evidence>
<sequence length="143" mass="15402">MSDNNGTPEPQVETTSVFRADLLKEMESSTGTAPASTGAENLPAGSALLVVKRGPNAGARFLLDQPTTTAGRHPESDIFLDDVTVSRRHAEFRINEGEFEVVDVGSLNGTYVNREPRNAQVMQTGDEIQIGKFRLVFLAGPAE</sequence>
<keyword id="KW-0002">3D-structure</keyword>
<keyword id="KW-0963">Cytoplasm</keyword>
<keyword id="KW-0903">Direct protein sequencing</keyword>
<keyword id="KW-0597">Phosphoprotein</keyword>
<keyword id="KW-1185">Reference proteome</keyword>
<proteinExistence type="evidence at protein level"/>
<feature type="initiator methionine" description="Removed" evidence="2">
    <location>
        <position position="1"/>
    </location>
</feature>
<feature type="chain" id="PRO_0000272962" description="Oxoglutarate dehydrogenase inhibitor">
    <location>
        <begin position="2"/>
        <end position="143"/>
    </location>
</feature>
<feature type="domain" description="FHA" evidence="1">
    <location>
        <begin position="68"/>
        <end position="117"/>
    </location>
</feature>
<feature type="modified residue" description="Phosphothreonine" evidence="2">
    <location>
        <position position="14"/>
    </location>
</feature>
<feature type="mutagenesis site" description="Inhibition of growth on glutamine and glutamate degradation." evidence="2">
    <original>T</original>
    <variation>A</variation>
    <location>
        <position position="14"/>
    </location>
</feature>
<feature type="helix" evidence="5">
    <location>
        <begin position="22"/>
        <end position="28"/>
    </location>
</feature>
<feature type="strand" evidence="6">
    <location>
        <begin position="35"/>
        <end position="38"/>
    </location>
</feature>
<feature type="turn" evidence="5">
    <location>
        <begin position="39"/>
        <end position="41"/>
    </location>
</feature>
<feature type="strand" evidence="5">
    <location>
        <begin position="43"/>
        <end position="45"/>
    </location>
</feature>
<feature type="strand" evidence="7">
    <location>
        <begin position="47"/>
        <end position="54"/>
    </location>
</feature>
<feature type="turn" evidence="7">
    <location>
        <begin position="55"/>
        <end position="58"/>
    </location>
</feature>
<feature type="strand" evidence="7">
    <location>
        <begin position="60"/>
        <end position="63"/>
    </location>
</feature>
<feature type="strand" evidence="7">
    <location>
        <begin position="65"/>
        <end position="73"/>
    </location>
</feature>
<feature type="strand" evidence="7">
    <location>
        <begin position="77"/>
        <end position="79"/>
    </location>
</feature>
<feature type="strand" evidence="6">
    <location>
        <begin position="82"/>
        <end position="84"/>
    </location>
</feature>
<feature type="strand" evidence="7">
    <location>
        <begin position="90"/>
        <end position="97"/>
    </location>
</feature>
<feature type="strand" evidence="7">
    <location>
        <begin position="99"/>
        <end position="103"/>
    </location>
</feature>
<feature type="strand" evidence="7">
    <location>
        <begin position="110"/>
        <end position="112"/>
    </location>
</feature>
<feature type="strand" evidence="7">
    <location>
        <begin position="118"/>
        <end position="121"/>
    </location>
</feature>
<feature type="strand" evidence="7">
    <location>
        <begin position="127"/>
        <end position="130"/>
    </location>
</feature>
<feature type="strand" evidence="7">
    <location>
        <begin position="133"/>
        <end position="139"/>
    </location>
</feature>